<evidence type="ECO:0000255" key="1">
    <source>
        <dbReference type="HAMAP-Rule" id="MF_01374"/>
    </source>
</evidence>
<proteinExistence type="inferred from homology"/>
<protein>
    <recommendedName>
        <fullName evidence="1">Hydroxyacylglutathione hydrolase</fullName>
        <ecNumber evidence="1">3.1.2.6</ecNumber>
    </recommendedName>
    <alternativeName>
        <fullName evidence="1">Glyoxalase II</fullName>
        <shortName evidence="1">Glx II</shortName>
    </alternativeName>
</protein>
<organism>
    <name type="scientific">Mesorhizobium japonicum (strain LMG 29417 / CECT 9101 / MAFF 303099)</name>
    <name type="common">Mesorhizobium loti (strain MAFF 303099)</name>
    <dbReference type="NCBI Taxonomy" id="266835"/>
    <lineage>
        <taxon>Bacteria</taxon>
        <taxon>Pseudomonadati</taxon>
        <taxon>Pseudomonadota</taxon>
        <taxon>Alphaproteobacteria</taxon>
        <taxon>Hyphomicrobiales</taxon>
        <taxon>Phyllobacteriaceae</taxon>
        <taxon>Mesorhizobium</taxon>
    </lineage>
</organism>
<reference key="1">
    <citation type="journal article" date="2000" name="DNA Res.">
        <title>Complete genome structure of the nitrogen-fixing symbiotic bacterium Mesorhizobium loti.</title>
        <authorList>
            <person name="Kaneko T."/>
            <person name="Nakamura Y."/>
            <person name="Sato S."/>
            <person name="Asamizu E."/>
            <person name="Kato T."/>
            <person name="Sasamoto S."/>
            <person name="Watanabe A."/>
            <person name="Idesawa K."/>
            <person name="Ishikawa A."/>
            <person name="Kawashima K."/>
            <person name="Kimura T."/>
            <person name="Kishida Y."/>
            <person name="Kiyokawa C."/>
            <person name="Kohara M."/>
            <person name="Matsumoto M."/>
            <person name="Matsuno A."/>
            <person name="Mochizuki Y."/>
            <person name="Nakayama S."/>
            <person name="Nakazaki N."/>
            <person name="Shimpo S."/>
            <person name="Sugimoto M."/>
            <person name="Takeuchi C."/>
            <person name="Yamada M."/>
            <person name="Tabata S."/>
        </authorList>
    </citation>
    <scope>NUCLEOTIDE SEQUENCE [LARGE SCALE GENOMIC DNA]</scope>
    <source>
        <strain>LMG 29417 / CECT 9101 / MAFF 303099</strain>
    </source>
</reference>
<feature type="chain" id="PRO_0000309687" description="Hydroxyacylglutathione hydrolase">
    <location>
        <begin position="1"/>
        <end position="255"/>
    </location>
</feature>
<feature type="binding site" evidence="1">
    <location>
        <position position="56"/>
    </location>
    <ligand>
        <name>Zn(2+)</name>
        <dbReference type="ChEBI" id="CHEBI:29105"/>
        <label>1</label>
    </ligand>
</feature>
<feature type="binding site" evidence="1">
    <location>
        <position position="58"/>
    </location>
    <ligand>
        <name>Zn(2+)</name>
        <dbReference type="ChEBI" id="CHEBI:29105"/>
        <label>1</label>
    </ligand>
</feature>
<feature type="binding site" evidence="1">
    <location>
        <position position="60"/>
    </location>
    <ligand>
        <name>Zn(2+)</name>
        <dbReference type="ChEBI" id="CHEBI:29105"/>
        <label>2</label>
    </ligand>
</feature>
<feature type="binding site" evidence="1">
    <location>
        <position position="61"/>
    </location>
    <ligand>
        <name>Zn(2+)</name>
        <dbReference type="ChEBI" id="CHEBI:29105"/>
        <label>2</label>
    </ligand>
</feature>
<feature type="binding site" evidence="1">
    <location>
        <position position="114"/>
    </location>
    <ligand>
        <name>Zn(2+)</name>
        <dbReference type="ChEBI" id="CHEBI:29105"/>
        <label>1</label>
    </ligand>
</feature>
<feature type="binding site" evidence="1">
    <location>
        <position position="133"/>
    </location>
    <ligand>
        <name>Zn(2+)</name>
        <dbReference type="ChEBI" id="CHEBI:29105"/>
        <label>1</label>
    </ligand>
</feature>
<feature type="binding site" evidence="1">
    <location>
        <position position="133"/>
    </location>
    <ligand>
        <name>Zn(2+)</name>
        <dbReference type="ChEBI" id="CHEBI:29105"/>
        <label>2</label>
    </ligand>
</feature>
<feature type="binding site" evidence="1">
    <location>
        <position position="171"/>
    </location>
    <ligand>
        <name>Zn(2+)</name>
        <dbReference type="ChEBI" id="CHEBI:29105"/>
        <label>2</label>
    </ligand>
</feature>
<dbReference type="EC" id="3.1.2.6" evidence="1"/>
<dbReference type="EMBL" id="BA000012">
    <property type="protein sequence ID" value="BAB50414.1"/>
    <property type="molecule type" value="Genomic_DNA"/>
</dbReference>
<dbReference type="RefSeq" id="WP_010911760.1">
    <property type="nucleotide sequence ID" value="NC_002678.2"/>
</dbReference>
<dbReference type="SMR" id="Q98G02"/>
<dbReference type="KEGG" id="mlo:mlr3546"/>
<dbReference type="PATRIC" id="fig|266835.9.peg.2825"/>
<dbReference type="eggNOG" id="COG0491">
    <property type="taxonomic scope" value="Bacteria"/>
</dbReference>
<dbReference type="HOGENOM" id="CLU_030571_4_1_5"/>
<dbReference type="UniPathway" id="UPA00619">
    <property type="reaction ID" value="UER00676"/>
</dbReference>
<dbReference type="Proteomes" id="UP000000552">
    <property type="component" value="Chromosome"/>
</dbReference>
<dbReference type="GO" id="GO:0004416">
    <property type="term" value="F:hydroxyacylglutathione hydrolase activity"/>
    <property type="evidence" value="ECO:0007669"/>
    <property type="project" value="UniProtKB-UniRule"/>
</dbReference>
<dbReference type="GO" id="GO:0046872">
    <property type="term" value="F:metal ion binding"/>
    <property type="evidence" value="ECO:0007669"/>
    <property type="project" value="UniProtKB-KW"/>
</dbReference>
<dbReference type="GO" id="GO:0019243">
    <property type="term" value="P:methylglyoxal catabolic process to D-lactate via S-lactoyl-glutathione"/>
    <property type="evidence" value="ECO:0007669"/>
    <property type="project" value="InterPro"/>
</dbReference>
<dbReference type="CDD" id="cd07723">
    <property type="entry name" value="hydroxyacylglutathione_hydrolase_MBL-fold"/>
    <property type="match status" value="1"/>
</dbReference>
<dbReference type="Gene3D" id="3.60.15.10">
    <property type="entry name" value="Ribonuclease Z/Hydroxyacylglutathione hydrolase-like"/>
    <property type="match status" value="1"/>
</dbReference>
<dbReference type="HAMAP" id="MF_01374">
    <property type="entry name" value="Glyoxalase_2"/>
    <property type="match status" value="1"/>
</dbReference>
<dbReference type="InterPro" id="IPR035680">
    <property type="entry name" value="Clx_II_MBL"/>
</dbReference>
<dbReference type="InterPro" id="IPR050110">
    <property type="entry name" value="Glyoxalase_II_hydrolase"/>
</dbReference>
<dbReference type="InterPro" id="IPR032282">
    <property type="entry name" value="HAGH_C"/>
</dbReference>
<dbReference type="InterPro" id="IPR017782">
    <property type="entry name" value="Hydroxyacylglutathione_Hdrlase"/>
</dbReference>
<dbReference type="InterPro" id="IPR001279">
    <property type="entry name" value="Metallo-B-lactamas"/>
</dbReference>
<dbReference type="InterPro" id="IPR036866">
    <property type="entry name" value="RibonucZ/Hydroxyglut_hydro"/>
</dbReference>
<dbReference type="NCBIfam" id="TIGR03413">
    <property type="entry name" value="GSH_gloB"/>
    <property type="match status" value="1"/>
</dbReference>
<dbReference type="PANTHER" id="PTHR43705">
    <property type="entry name" value="HYDROXYACYLGLUTATHIONE HYDROLASE"/>
    <property type="match status" value="1"/>
</dbReference>
<dbReference type="PANTHER" id="PTHR43705:SF1">
    <property type="entry name" value="HYDROXYACYLGLUTATHIONE HYDROLASE GLOB"/>
    <property type="match status" value="1"/>
</dbReference>
<dbReference type="Pfam" id="PF16123">
    <property type="entry name" value="HAGH_C"/>
    <property type="match status" value="1"/>
</dbReference>
<dbReference type="Pfam" id="PF00753">
    <property type="entry name" value="Lactamase_B"/>
    <property type="match status" value="1"/>
</dbReference>
<dbReference type="PIRSF" id="PIRSF005457">
    <property type="entry name" value="Glx"/>
    <property type="match status" value="1"/>
</dbReference>
<dbReference type="SMART" id="SM00849">
    <property type="entry name" value="Lactamase_B"/>
    <property type="match status" value="1"/>
</dbReference>
<dbReference type="SUPFAM" id="SSF56281">
    <property type="entry name" value="Metallo-hydrolase/oxidoreductase"/>
    <property type="match status" value="1"/>
</dbReference>
<sequence>MAVEIEQFMCRSDNFGVLVHDPKSGQTAIIDAPEEAPILAAIKRTGWTPTMILTTHHHMDHVEANLALKERFKLRIVGPEAEKAKIPGIDETVEEGSVLHLGDERIEVIATPGHTAGHVSYHLPASKVAFTADTLFALGCGRLFECKPPVMYESLRKLAALPAATTIYCGHEYTLANARFALTVDPTNSALKERATRIEALRVDNKPTLPTTIGEELSTNPFLRWHDPAIRKHLGMEKAGDAEVFAEIRKRKDNF</sequence>
<name>GLO2_RHILO</name>
<keyword id="KW-0378">Hydrolase</keyword>
<keyword id="KW-0479">Metal-binding</keyword>
<keyword id="KW-0862">Zinc</keyword>
<accession>Q98G02</accession>
<gene>
    <name evidence="1" type="primary">gloB</name>
    <name type="ordered locus">mlr3546</name>
</gene>
<comment type="function">
    <text evidence="1">Thiolesterase that catalyzes the hydrolysis of S-D-lactoyl-glutathione to form glutathione and D-lactic acid.</text>
</comment>
<comment type="catalytic activity">
    <reaction evidence="1">
        <text>an S-(2-hydroxyacyl)glutathione + H2O = a 2-hydroxy carboxylate + glutathione + H(+)</text>
        <dbReference type="Rhea" id="RHEA:21864"/>
        <dbReference type="ChEBI" id="CHEBI:15377"/>
        <dbReference type="ChEBI" id="CHEBI:15378"/>
        <dbReference type="ChEBI" id="CHEBI:57925"/>
        <dbReference type="ChEBI" id="CHEBI:58896"/>
        <dbReference type="ChEBI" id="CHEBI:71261"/>
        <dbReference type="EC" id="3.1.2.6"/>
    </reaction>
</comment>
<comment type="cofactor">
    <cofactor evidence="1">
        <name>Zn(2+)</name>
        <dbReference type="ChEBI" id="CHEBI:29105"/>
    </cofactor>
    <text evidence="1">Binds 2 Zn(2+) ions per subunit.</text>
</comment>
<comment type="pathway">
    <text evidence="1">Secondary metabolite metabolism; methylglyoxal degradation; (R)-lactate from methylglyoxal: step 2/2.</text>
</comment>
<comment type="subunit">
    <text evidence="1">Monomer.</text>
</comment>
<comment type="similarity">
    <text evidence="1">Belongs to the metallo-beta-lactamase superfamily. Glyoxalase II family.</text>
</comment>